<proteinExistence type="inferred from homology"/>
<dbReference type="EC" id="2.1.2.1" evidence="1"/>
<dbReference type="EMBL" id="CP001612">
    <property type="protein sequence ID" value="ACP53859.1"/>
    <property type="molecule type" value="Genomic_DNA"/>
</dbReference>
<dbReference type="RefSeq" id="WP_010977717.1">
    <property type="nucleotide sequence ID" value="NC_012633.1"/>
</dbReference>
<dbReference type="SMR" id="C3PLL9"/>
<dbReference type="GeneID" id="928297"/>
<dbReference type="KEGG" id="raf:RAF_ORF1044"/>
<dbReference type="HOGENOM" id="CLU_022477_2_1_5"/>
<dbReference type="UniPathway" id="UPA00193"/>
<dbReference type="UniPathway" id="UPA00288">
    <property type="reaction ID" value="UER01023"/>
</dbReference>
<dbReference type="Proteomes" id="UP000002305">
    <property type="component" value="Chromosome"/>
</dbReference>
<dbReference type="GO" id="GO:0005829">
    <property type="term" value="C:cytosol"/>
    <property type="evidence" value="ECO:0007669"/>
    <property type="project" value="TreeGrafter"/>
</dbReference>
<dbReference type="GO" id="GO:0004372">
    <property type="term" value="F:glycine hydroxymethyltransferase activity"/>
    <property type="evidence" value="ECO:0007669"/>
    <property type="project" value="UniProtKB-UniRule"/>
</dbReference>
<dbReference type="GO" id="GO:0030170">
    <property type="term" value="F:pyridoxal phosphate binding"/>
    <property type="evidence" value="ECO:0007669"/>
    <property type="project" value="UniProtKB-UniRule"/>
</dbReference>
<dbReference type="GO" id="GO:0019264">
    <property type="term" value="P:glycine biosynthetic process from serine"/>
    <property type="evidence" value="ECO:0007669"/>
    <property type="project" value="UniProtKB-UniRule"/>
</dbReference>
<dbReference type="GO" id="GO:0035999">
    <property type="term" value="P:tetrahydrofolate interconversion"/>
    <property type="evidence" value="ECO:0007669"/>
    <property type="project" value="UniProtKB-UniRule"/>
</dbReference>
<dbReference type="CDD" id="cd00378">
    <property type="entry name" value="SHMT"/>
    <property type="match status" value="1"/>
</dbReference>
<dbReference type="FunFam" id="3.40.640.10:FF:000001">
    <property type="entry name" value="Serine hydroxymethyltransferase"/>
    <property type="match status" value="1"/>
</dbReference>
<dbReference type="Gene3D" id="3.90.1150.10">
    <property type="entry name" value="Aspartate Aminotransferase, domain 1"/>
    <property type="match status" value="1"/>
</dbReference>
<dbReference type="Gene3D" id="3.40.640.10">
    <property type="entry name" value="Type I PLP-dependent aspartate aminotransferase-like (Major domain)"/>
    <property type="match status" value="1"/>
</dbReference>
<dbReference type="HAMAP" id="MF_00051">
    <property type="entry name" value="SHMT"/>
    <property type="match status" value="1"/>
</dbReference>
<dbReference type="InterPro" id="IPR015424">
    <property type="entry name" value="PyrdxlP-dep_Trfase"/>
</dbReference>
<dbReference type="InterPro" id="IPR015421">
    <property type="entry name" value="PyrdxlP-dep_Trfase_major"/>
</dbReference>
<dbReference type="InterPro" id="IPR015422">
    <property type="entry name" value="PyrdxlP-dep_Trfase_small"/>
</dbReference>
<dbReference type="InterPro" id="IPR001085">
    <property type="entry name" value="Ser_HO-MeTrfase"/>
</dbReference>
<dbReference type="InterPro" id="IPR049943">
    <property type="entry name" value="Ser_HO-MeTrfase-like"/>
</dbReference>
<dbReference type="InterPro" id="IPR019798">
    <property type="entry name" value="Ser_HO-MeTrfase_PLP_BS"/>
</dbReference>
<dbReference type="InterPro" id="IPR039429">
    <property type="entry name" value="SHMT-like_dom"/>
</dbReference>
<dbReference type="NCBIfam" id="NF000586">
    <property type="entry name" value="PRK00011.1"/>
    <property type="match status" value="1"/>
</dbReference>
<dbReference type="PANTHER" id="PTHR11680">
    <property type="entry name" value="SERINE HYDROXYMETHYLTRANSFERASE"/>
    <property type="match status" value="1"/>
</dbReference>
<dbReference type="PANTHER" id="PTHR11680:SF35">
    <property type="entry name" value="SERINE HYDROXYMETHYLTRANSFERASE 1"/>
    <property type="match status" value="1"/>
</dbReference>
<dbReference type="Pfam" id="PF00464">
    <property type="entry name" value="SHMT"/>
    <property type="match status" value="1"/>
</dbReference>
<dbReference type="PIRSF" id="PIRSF000412">
    <property type="entry name" value="SHMT"/>
    <property type="match status" value="1"/>
</dbReference>
<dbReference type="SUPFAM" id="SSF53383">
    <property type="entry name" value="PLP-dependent transferases"/>
    <property type="match status" value="1"/>
</dbReference>
<dbReference type="PROSITE" id="PS00096">
    <property type="entry name" value="SHMT"/>
    <property type="match status" value="1"/>
</dbReference>
<reference key="1">
    <citation type="journal article" date="2009" name="BMC Genomics">
        <title>Analysis of the Rickettsia africae genome reveals that virulence acquisition in Rickettsia species may be explained by genome reduction.</title>
        <authorList>
            <person name="Fournier P.-E."/>
            <person name="El Karkouri K."/>
            <person name="Leroy Q."/>
            <person name="Robert C."/>
            <person name="Giumelli B."/>
            <person name="Renesto P."/>
            <person name="Socolovschi C."/>
            <person name="Parola P."/>
            <person name="Audic S."/>
            <person name="Raoult D."/>
        </authorList>
    </citation>
    <scope>NUCLEOTIDE SEQUENCE [LARGE SCALE GENOMIC DNA]</scope>
    <source>
        <strain>ESF-5</strain>
    </source>
</reference>
<organism>
    <name type="scientific">Rickettsia africae (strain ESF-5)</name>
    <dbReference type="NCBI Taxonomy" id="347255"/>
    <lineage>
        <taxon>Bacteria</taxon>
        <taxon>Pseudomonadati</taxon>
        <taxon>Pseudomonadota</taxon>
        <taxon>Alphaproteobacteria</taxon>
        <taxon>Rickettsiales</taxon>
        <taxon>Rickettsiaceae</taxon>
        <taxon>Rickettsieae</taxon>
        <taxon>Rickettsia</taxon>
        <taxon>spotted fever group</taxon>
    </lineage>
</organism>
<sequence length="420" mass="45957">MNIFNNNLHETDKEINEIIKHEKLRQSSVIELIASENFVSPAVLEAQGALLTNKYAEGYPSKRFYNGCEEVDKAENLAIERVKKLFNCKYANVQPHSGSQANQAVYLALLQPGDTVLGMSLDSGGHLTHGAAPNMSGKWFNAVSYSVNKETYLIDYDEIERLADLHKPKLLIAGFSAYPRNIDFAKFREIVDKVGAYFMADIAHIAGLVATGEHQSPIPYAHAVTSTTHKTLRGPRGGLILSNDEAIGHKINSALFPGLQGGPLMHIIAAKAVAFLENLQPEYKSYIQQVISNAKALASSLQERGYDILTGGTDNHIVLVDLRKDGITGKLAANSLDRAGITCNKNAIPFDETSPFITSGIRLGTPACTTRGFKEKDFVLVGHMVADILDGLKNNEDNSALEQKVLNEVTKLIELFPFYG</sequence>
<protein>
    <recommendedName>
        <fullName evidence="1">Serine hydroxymethyltransferase</fullName>
        <shortName evidence="1">SHMT</shortName>
        <shortName evidence="1">Serine methylase</shortName>
        <ecNumber evidence="1">2.1.2.1</ecNumber>
    </recommendedName>
</protein>
<keyword id="KW-0028">Amino-acid biosynthesis</keyword>
<keyword id="KW-0963">Cytoplasm</keyword>
<keyword id="KW-0554">One-carbon metabolism</keyword>
<keyword id="KW-0663">Pyridoxal phosphate</keyword>
<keyword id="KW-0808">Transferase</keyword>
<feature type="chain" id="PRO_1000202268" description="Serine hydroxymethyltransferase">
    <location>
        <begin position="1"/>
        <end position="420"/>
    </location>
</feature>
<feature type="binding site" evidence="1">
    <location>
        <position position="121"/>
    </location>
    <ligand>
        <name>(6S)-5,6,7,8-tetrahydrofolate</name>
        <dbReference type="ChEBI" id="CHEBI:57453"/>
    </ligand>
</feature>
<feature type="binding site" evidence="1">
    <location>
        <begin position="125"/>
        <end position="127"/>
    </location>
    <ligand>
        <name>(6S)-5,6,7,8-tetrahydrofolate</name>
        <dbReference type="ChEBI" id="CHEBI:57453"/>
    </ligand>
</feature>
<feature type="binding site" evidence="1">
    <location>
        <begin position="354"/>
        <end position="356"/>
    </location>
    <ligand>
        <name>(6S)-5,6,7,8-tetrahydrofolate</name>
        <dbReference type="ChEBI" id="CHEBI:57453"/>
    </ligand>
</feature>
<feature type="site" description="Plays an important role in substrate specificity" evidence="1">
    <location>
        <position position="229"/>
    </location>
</feature>
<feature type="modified residue" description="N6-(pyridoxal phosphate)lysine" evidence="1">
    <location>
        <position position="230"/>
    </location>
</feature>
<evidence type="ECO:0000255" key="1">
    <source>
        <dbReference type="HAMAP-Rule" id="MF_00051"/>
    </source>
</evidence>
<accession>C3PLL9</accession>
<comment type="function">
    <text evidence="1">Catalyzes the reversible interconversion of serine and glycine with tetrahydrofolate (THF) serving as the one-carbon carrier. This reaction serves as the major source of one-carbon groups required for the biosynthesis of purines, thymidylate, methionine, and other important biomolecules. Also exhibits THF-independent aldolase activity toward beta-hydroxyamino acids, producing glycine and aldehydes, via a retro-aldol mechanism.</text>
</comment>
<comment type="catalytic activity">
    <reaction evidence="1">
        <text>(6R)-5,10-methylene-5,6,7,8-tetrahydrofolate + glycine + H2O = (6S)-5,6,7,8-tetrahydrofolate + L-serine</text>
        <dbReference type="Rhea" id="RHEA:15481"/>
        <dbReference type="ChEBI" id="CHEBI:15377"/>
        <dbReference type="ChEBI" id="CHEBI:15636"/>
        <dbReference type="ChEBI" id="CHEBI:33384"/>
        <dbReference type="ChEBI" id="CHEBI:57305"/>
        <dbReference type="ChEBI" id="CHEBI:57453"/>
        <dbReference type="EC" id="2.1.2.1"/>
    </reaction>
</comment>
<comment type="cofactor">
    <cofactor evidence="1">
        <name>pyridoxal 5'-phosphate</name>
        <dbReference type="ChEBI" id="CHEBI:597326"/>
    </cofactor>
</comment>
<comment type="pathway">
    <text evidence="1">One-carbon metabolism; tetrahydrofolate interconversion.</text>
</comment>
<comment type="pathway">
    <text evidence="1">Amino-acid biosynthesis; glycine biosynthesis; glycine from L-serine: step 1/1.</text>
</comment>
<comment type="subunit">
    <text evidence="1">Homodimer.</text>
</comment>
<comment type="subcellular location">
    <subcellularLocation>
        <location evidence="1">Cytoplasm</location>
    </subcellularLocation>
</comment>
<comment type="similarity">
    <text evidence="1">Belongs to the SHMT family.</text>
</comment>
<gene>
    <name evidence="1" type="primary">glyA</name>
    <name type="ordered locus">RAF_ORF1044</name>
</gene>
<name>GLYA_RICAE</name>